<name>IDH3A_MESAU</name>
<reference key="1">
    <citation type="journal article" date="2010" name="Asian J. Androl.">
        <title>Glucose-regulated protein precursor (GRP78) and tumor rejection antigen (GP96) are unique to hamster caput epididymal spermatozoa.</title>
        <authorList>
            <person name="Kameshwari D.B."/>
            <person name="Bhande S."/>
            <person name="Sundaram C.S."/>
            <person name="Kota V."/>
            <person name="Siva A.B."/>
            <person name="Shivaji S."/>
        </authorList>
    </citation>
    <scope>IDENTIFICATION BY MASS SPECTROMETRY</scope>
</reference>
<organism>
    <name type="scientific">Mesocricetus auratus</name>
    <name type="common">Golden hamster</name>
    <dbReference type="NCBI Taxonomy" id="10036"/>
    <lineage>
        <taxon>Eukaryota</taxon>
        <taxon>Metazoa</taxon>
        <taxon>Chordata</taxon>
        <taxon>Craniata</taxon>
        <taxon>Vertebrata</taxon>
        <taxon>Euteleostomi</taxon>
        <taxon>Mammalia</taxon>
        <taxon>Eutheria</taxon>
        <taxon>Euarchontoglires</taxon>
        <taxon>Glires</taxon>
        <taxon>Rodentia</taxon>
        <taxon>Myomorpha</taxon>
        <taxon>Muroidea</taxon>
        <taxon>Cricetidae</taxon>
        <taxon>Cricetinae</taxon>
        <taxon>Mesocricetus</taxon>
    </lineage>
</organism>
<dbReference type="EC" id="1.1.1.41" evidence="1"/>
<dbReference type="SMR" id="P86225"/>
<dbReference type="STRING" id="10036.ENSMAUP00000005913"/>
<dbReference type="Proteomes" id="UP000189706">
    <property type="component" value="Unplaced"/>
</dbReference>
<dbReference type="GO" id="GO:0005739">
    <property type="term" value="C:mitochondrion"/>
    <property type="evidence" value="ECO:0007669"/>
    <property type="project" value="UniProtKB-SubCell"/>
</dbReference>
<dbReference type="GO" id="GO:0004449">
    <property type="term" value="F:isocitrate dehydrogenase (NAD+) activity"/>
    <property type="evidence" value="ECO:0000250"/>
    <property type="project" value="UniProtKB"/>
</dbReference>
<dbReference type="GO" id="GO:0000287">
    <property type="term" value="F:magnesium ion binding"/>
    <property type="evidence" value="ECO:0000250"/>
    <property type="project" value="UniProtKB"/>
</dbReference>
<dbReference type="GO" id="GO:0006102">
    <property type="term" value="P:isocitrate metabolic process"/>
    <property type="evidence" value="ECO:0007669"/>
    <property type="project" value="TreeGrafter"/>
</dbReference>
<dbReference type="GO" id="GO:0006099">
    <property type="term" value="P:tricarboxylic acid cycle"/>
    <property type="evidence" value="ECO:0007669"/>
    <property type="project" value="UniProtKB-KW"/>
</dbReference>
<dbReference type="Gene3D" id="3.40.718.10">
    <property type="entry name" value="Isopropylmalate Dehydrogenase"/>
    <property type="match status" value="1"/>
</dbReference>
<dbReference type="InterPro" id="IPR024084">
    <property type="entry name" value="IsoPropMal-DH-like_dom"/>
</dbReference>
<dbReference type="PANTHER" id="PTHR11835">
    <property type="entry name" value="DECARBOXYLATING DEHYDROGENASES-ISOCITRATE, ISOPROPYLMALATE, TARTRATE"/>
    <property type="match status" value="1"/>
</dbReference>
<dbReference type="PANTHER" id="PTHR11835:SF34">
    <property type="entry name" value="ISOCITRATE DEHYDROGENASE [NAD] SUBUNIT ALPHA, MITOCHONDRIAL"/>
    <property type="match status" value="1"/>
</dbReference>
<dbReference type="Pfam" id="PF00180">
    <property type="entry name" value="Iso_dh"/>
    <property type="match status" value="1"/>
</dbReference>
<dbReference type="SMART" id="SM01329">
    <property type="entry name" value="Iso_dh"/>
    <property type="match status" value="1"/>
</dbReference>
<dbReference type="SUPFAM" id="SSF53659">
    <property type="entry name" value="Isocitrate/Isopropylmalate dehydrogenase-like"/>
    <property type="match status" value="1"/>
</dbReference>
<comment type="function">
    <text evidence="1">Catalytic subunit of the enzyme which catalyzes the decarboxylation of isocitrate (ICT) into alpha-ketoglutarate. The heterodimer composed of the alpha (IDH3A) and beta (IDH3B) subunits and the heterodimer composed of the alpha (IDH3A) and gamma (IDH3G) subunits, have considerable basal activity but the full activity of the heterotetramer (containing two subunits of IDH3A, one of IDH3B and one of IDH3G) requires the assembly and cooperative function of both heterodimers.</text>
</comment>
<comment type="catalytic activity">
    <reaction evidence="1">
        <text>D-threo-isocitrate + NAD(+) = 2-oxoglutarate + CO2 + NADH</text>
        <dbReference type="Rhea" id="RHEA:23632"/>
        <dbReference type="ChEBI" id="CHEBI:15562"/>
        <dbReference type="ChEBI" id="CHEBI:16526"/>
        <dbReference type="ChEBI" id="CHEBI:16810"/>
        <dbReference type="ChEBI" id="CHEBI:57540"/>
        <dbReference type="ChEBI" id="CHEBI:57945"/>
        <dbReference type="EC" id="1.1.1.41"/>
    </reaction>
    <physiologicalReaction direction="left-to-right" evidence="1">
        <dbReference type="Rhea" id="RHEA:23633"/>
    </physiologicalReaction>
</comment>
<comment type="cofactor">
    <cofactor evidence="1">
        <name>Mg(2+)</name>
        <dbReference type="ChEBI" id="CHEBI:18420"/>
    </cofactor>
    <cofactor evidence="1">
        <name>Mn(2+)</name>
        <dbReference type="ChEBI" id="CHEBI:29035"/>
    </cofactor>
    <text evidence="1">Divalent metal cations; Mn(2+) or Mg(2+). Activity higher in presence of Mn(2+) than of Mg(2+). Binds 1 Mg(2+) or Mn(2+) ion per subunit.</text>
</comment>
<comment type="activity regulation">
    <text evidence="1">The heterotetramer and the heterodimer composed of IDH3A and IDH3G subunits can be allosterically activated by citrate (CIT) or/and ADP, and the two activators can act independently or synergistically. The heterodimer composed of IDH3A and IDH3B subunits cannot be allosterically regulated and the allosteric regulation of the heterotetramer is through the IDH3G subunit and not the IDH3B subunit. The IDH3G subunit contains the allosteric site which consists of a CIT-binding site and an ADP-binding site, and the binding of CIT and ADP causes conformational changes at the allosteric site which are transmitted to the active site in the catalytic subunit (IDH3A) through a cascade of conformational changes at the heterodimer interface, leading to stabilization of the isocitrate-binding at the active site and thus activation of the enzyme. ATP can activate the heterotetramer and the heterodimer composed of IDH3A and IDH3G subunits at low concentrations but inhibits their activities at high concentrations, whereas ATP exhibits only inhibitory effect on the heterodimer composed of IDH3A and IDH3B subunits.</text>
</comment>
<comment type="subunit">
    <text evidence="1">Heterooligomer of subunits alpha (IDH3A), beta (IDH3B), and gamma (IDH3G) in the apparent ratio of 2:1:1. The heterodimer containing one IDH3A and one IDH3B subunit and the heterodimer containing one IDH3A and one IDH3G subunit assemble into a heterotetramer (which contains two subunits of IDH3A, one of IDH3B and one of IDH3G) and further into the heterooctamer.</text>
</comment>
<comment type="subcellular location">
    <subcellularLocation>
        <location evidence="1">Mitochondrion</location>
    </subcellularLocation>
</comment>
<comment type="similarity">
    <text evidence="3">Belongs to the isocitrate and isopropylmalate dehydrogenases family.</text>
</comment>
<comment type="caution">
    <text evidence="4">The order of the peptides shown is unknown.</text>
</comment>
<protein>
    <recommendedName>
        <fullName evidence="1">Isocitrate dehydrogenase [NAD] subunit alpha, mitochondrial</fullName>
        <ecNumber evidence="1">1.1.1.41</ecNumber>
    </recommendedName>
    <alternativeName>
        <fullName evidence="1">Isocitric dehydrogenase subunit alpha</fullName>
    </alternativeName>
    <alternativeName>
        <fullName evidence="1">NAD(+)-specific ICDH subunit alpha</fullName>
    </alternativeName>
</protein>
<evidence type="ECO:0000250" key="1">
    <source>
        <dbReference type="UniProtKB" id="P50213"/>
    </source>
</evidence>
<evidence type="ECO:0000250" key="2">
    <source>
        <dbReference type="UniProtKB" id="Q9D6R2"/>
    </source>
</evidence>
<evidence type="ECO:0000255" key="3"/>
<evidence type="ECO:0000305" key="4"/>
<feature type="chain" id="PRO_0000394308" description="Isocitrate dehydrogenase [NAD] subunit alpha, mitochondrial">
    <location>
        <begin position="1" status="less than"/>
        <end position="134" status="greater than"/>
    </location>
</feature>
<feature type="binding site" evidence="1">
    <location>
        <position position="64"/>
    </location>
    <ligand>
        <name>substrate</name>
    </ligand>
</feature>
<feature type="binding site" evidence="1">
    <location>
        <position position="74"/>
    </location>
    <ligand>
        <name>substrate</name>
    </ligand>
</feature>
<feature type="binding site" evidence="1">
    <location>
        <position position="95"/>
    </location>
    <ligand>
        <name>substrate</name>
    </ligand>
</feature>
<feature type="modified residue" description="N6-succinyllysine" evidence="2">
    <location>
        <position position="37"/>
    </location>
</feature>
<feature type="modified residue" description="Phosphothreonine" evidence="2">
    <location>
        <position position="50"/>
    </location>
</feature>
<feature type="non-consecutive residues" evidence="4">
    <location>
        <begin position="12"/>
        <end position="13"/>
    </location>
</feature>
<feature type="non-consecutive residues" evidence="4">
    <location>
        <begin position="45"/>
        <end position="46"/>
    </location>
</feature>
<feature type="non-consecutive residues" evidence="4">
    <location>
        <begin position="54"/>
        <end position="55"/>
    </location>
</feature>
<feature type="non-terminal residue">
    <location>
        <position position="1"/>
    </location>
</feature>
<feature type="non-terminal residue">
    <location>
        <position position="134"/>
    </location>
</feature>
<sequence>MRPGVAAVAAVRIFDAAKAPIQWEERNVTAIQGPGGKWMIPPEAKGPLKTPIAAGHPSMNLLLRKTFDLYANVRPCVSIEGYKTPYTDVNIVTIRRIAEFAFEYARDMANPTALLLSAVMMLRCSDFTEEICRR</sequence>
<accession>P86225</accession>
<gene>
    <name evidence="1" type="primary">IDH3A</name>
</gene>
<proteinExistence type="evidence at protein level"/>
<keyword id="KW-0460">Magnesium</keyword>
<keyword id="KW-0464">Manganese</keyword>
<keyword id="KW-0479">Metal-binding</keyword>
<keyword id="KW-0496">Mitochondrion</keyword>
<keyword id="KW-0520">NAD</keyword>
<keyword id="KW-0560">Oxidoreductase</keyword>
<keyword id="KW-0597">Phosphoprotein</keyword>
<keyword id="KW-1185">Reference proteome</keyword>
<keyword id="KW-0816">Tricarboxylic acid cycle</keyword>